<dbReference type="EC" id="6.3.5.7" evidence="1"/>
<dbReference type="EMBL" id="CP000408">
    <property type="protein sequence ID" value="ABP91504.1"/>
    <property type="molecule type" value="Genomic_DNA"/>
</dbReference>
<dbReference type="SMR" id="A4VZG5"/>
<dbReference type="KEGG" id="ssv:SSU98_0346"/>
<dbReference type="HOGENOM" id="CLU_009600_0_3_9"/>
<dbReference type="GO" id="GO:0030956">
    <property type="term" value="C:glutamyl-tRNA(Gln) amidotransferase complex"/>
    <property type="evidence" value="ECO:0007669"/>
    <property type="project" value="InterPro"/>
</dbReference>
<dbReference type="GO" id="GO:0005524">
    <property type="term" value="F:ATP binding"/>
    <property type="evidence" value="ECO:0007669"/>
    <property type="project" value="UniProtKB-KW"/>
</dbReference>
<dbReference type="GO" id="GO:0050567">
    <property type="term" value="F:glutaminyl-tRNA synthase (glutamine-hydrolyzing) activity"/>
    <property type="evidence" value="ECO:0007669"/>
    <property type="project" value="UniProtKB-UniRule"/>
</dbReference>
<dbReference type="GO" id="GO:0006412">
    <property type="term" value="P:translation"/>
    <property type="evidence" value="ECO:0007669"/>
    <property type="project" value="UniProtKB-UniRule"/>
</dbReference>
<dbReference type="Gene3D" id="3.90.1300.10">
    <property type="entry name" value="Amidase signature (AS) domain"/>
    <property type="match status" value="1"/>
</dbReference>
<dbReference type="HAMAP" id="MF_00120">
    <property type="entry name" value="GatA"/>
    <property type="match status" value="1"/>
</dbReference>
<dbReference type="InterPro" id="IPR000120">
    <property type="entry name" value="Amidase"/>
</dbReference>
<dbReference type="InterPro" id="IPR020556">
    <property type="entry name" value="Amidase_CS"/>
</dbReference>
<dbReference type="InterPro" id="IPR023631">
    <property type="entry name" value="Amidase_dom"/>
</dbReference>
<dbReference type="InterPro" id="IPR036928">
    <property type="entry name" value="AS_sf"/>
</dbReference>
<dbReference type="InterPro" id="IPR004412">
    <property type="entry name" value="GatA"/>
</dbReference>
<dbReference type="NCBIfam" id="TIGR00132">
    <property type="entry name" value="gatA"/>
    <property type="match status" value="1"/>
</dbReference>
<dbReference type="PANTHER" id="PTHR11895:SF151">
    <property type="entry name" value="GLUTAMYL-TRNA(GLN) AMIDOTRANSFERASE SUBUNIT A"/>
    <property type="match status" value="1"/>
</dbReference>
<dbReference type="PANTHER" id="PTHR11895">
    <property type="entry name" value="TRANSAMIDASE"/>
    <property type="match status" value="1"/>
</dbReference>
<dbReference type="Pfam" id="PF01425">
    <property type="entry name" value="Amidase"/>
    <property type="match status" value="1"/>
</dbReference>
<dbReference type="SUPFAM" id="SSF75304">
    <property type="entry name" value="Amidase signature (AS) enzymes"/>
    <property type="match status" value="1"/>
</dbReference>
<dbReference type="PROSITE" id="PS00571">
    <property type="entry name" value="AMIDASES"/>
    <property type="match status" value="1"/>
</dbReference>
<feature type="chain" id="PRO_1000015916" description="Glutamyl-tRNA(Gln) amidotransferase subunit A">
    <location>
        <begin position="1"/>
        <end position="488"/>
    </location>
</feature>
<feature type="active site" description="Charge relay system" evidence="1">
    <location>
        <position position="77"/>
    </location>
</feature>
<feature type="active site" description="Charge relay system" evidence="1">
    <location>
        <position position="152"/>
    </location>
</feature>
<feature type="active site" description="Acyl-ester intermediate" evidence="1">
    <location>
        <position position="176"/>
    </location>
</feature>
<evidence type="ECO:0000255" key="1">
    <source>
        <dbReference type="HAMAP-Rule" id="MF_00120"/>
    </source>
</evidence>
<organism>
    <name type="scientific">Streptococcus suis (strain 98HAH33)</name>
    <dbReference type="NCBI Taxonomy" id="391296"/>
    <lineage>
        <taxon>Bacteria</taxon>
        <taxon>Bacillati</taxon>
        <taxon>Bacillota</taxon>
        <taxon>Bacilli</taxon>
        <taxon>Lactobacillales</taxon>
        <taxon>Streptococcaceae</taxon>
        <taxon>Streptococcus</taxon>
    </lineage>
</organism>
<sequence>MTFNNKTIDELHDLLVKKEISAVELTKATLEDIKSREGAVDAFLTITEDAALAQAAALDEKGIDADNVMAGIPLAVKDNISTKGILTTAASKMLYNYEPIFDATSVAQAYAKDMIIVGKTNMDEFAMGGSNENSAFKPTKNAWDQTKVPGGSSGGSAAAVASGQVRLSLGSDTGGSIRQPAAFNGIVGMKPTYGTVSRFGLIAFGSSLDQIGPFSQTVKENAQLLNVISGHDVKDATSTINEIADFTSKIGQDIKGMKIALPKEYMGEGIDPQVKETILKAAKHLESLGAIIEEVSLPHSKYGVAVYYIIASSEASSNLQRFDGIRYGFRAEDATNLDEIYVKTRSQGFGEEVKRRIMLGTFSLSSGYYDAYFKKAGQVRTLIIQDFEKVFADYDLILGPTAPTVAFGLDTLNHDPVAMYLADLLTIPVNLAGLPGLSIPAGFVEGLPVGLQLIGPKYSEETIYQVAAAFEATTDYHKQQPVIFGGAN</sequence>
<comment type="function">
    <text evidence="1">Allows the formation of correctly charged Gln-tRNA(Gln) through the transamidation of misacylated Glu-tRNA(Gln) in organisms which lack glutaminyl-tRNA synthetase. The reaction takes place in the presence of glutamine and ATP through an activated gamma-phospho-Glu-tRNA(Gln).</text>
</comment>
<comment type="catalytic activity">
    <reaction evidence="1">
        <text>L-glutamyl-tRNA(Gln) + L-glutamine + ATP + H2O = L-glutaminyl-tRNA(Gln) + L-glutamate + ADP + phosphate + H(+)</text>
        <dbReference type="Rhea" id="RHEA:17521"/>
        <dbReference type="Rhea" id="RHEA-COMP:9681"/>
        <dbReference type="Rhea" id="RHEA-COMP:9684"/>
        <dbReference type="ChEBI" id="CHEBI:15377"/>
        <dbReference type="ChEBI" id="CHEBI:15378"/>
        <dbReference type="ChEBI" id="CHEBI:29985"/>
        <dbReference type="ChEBI" id="CHEBI:30616"/>
        <dbReference type="ChEBI" id="CHEBI:43474"/>
        <dbReference type="ChEBI" id="CHEBI:58359"/>
        <dbReference type="ChEBI" id="CHEBI:78520"/>
        <dbReference type="ChEBI" id="CHEBI:78521"/>
        <dbReference type="ChEBI" id="CHEBI:456216"/>
        <dbReference type="EC" id="6.3.5.7"/>
    </reaction>
</comment>
<comment type="subunit">
    <text evidence="1">Heterotrimer of A, B and C subunits.</text>
</comment>
<comment type="similarity">
    <text evidence="1">Belongs to the amidase family. GatA subfamily.</text>
</comment>
<keyword id="KW-0067">ATP-binding</keyword>
<keyword id="KW-0436">Ligase</keyword>
<keyword id="KW-0547">Nucleotide-binding</keyword>
<keyword id="KW-0648">Protein biosynthesis</keyword>
<protein>
    <recommendedName>
        <fullName evidence="1">Glutamyl-tRNA(Gln) amidotransferase subunit A</fullName>
        <shortName evidence="1">Glu-ADT subunit A</shortName>
        <ecNumber evidence="1">6.3.5.7</ecNumber>
    </recommendedName>
</protein>
<accession>A4VZG5</accession>
<gene>
    <name evidence="1" type="primary">gatA</name>
    <name type="ordered locus">SSU98_0346</name>
</gene>
<reference key="1">
    <citation type="journal article" date="2007" name="PLoS ONE">
        <title>A glimpse of streptococcal toxic shock syndrome from comparative genomics of S. suis 2 Chinese isolates.</title>
        <authorList>
            <person name="Chen C."/>
            <person name="Tang J."/>
            <person name="Dong W."/>
            <person name="Wang C."/>
            <person name="Feng Y."/>
            <person name="Wang J."/>
            <person name="Zheng F."/>
            <person name="Pan X."/>
            <person name="Liu D."/>
            <person name="Li M."/>
            <person name="Song Y."/>
            <person name="Zhu X."/>
            <person name="Sun H."/>
            <person name="Feng T."/>
            <person name="Guo Z."/>
            <person name="Ju A."/>
            <person name="Ge J."/>
            <person name="Dong Y."/>
            <person name="Sun W."/>
            <person name="Jiang Y."/>
            <person name="Wang J."/>
            <person name="Yan J."/>
            <person name="Yang H."/>
            <person name="Wang X."/>
            <person name="Gao G.F."/>
            <person name="Yang R."/>
            <person name="Wang J."/>
            <person name="Yu J."/>
        </authorList>
    </citation>
    <scope>NUCLEOTIDE SEQUENCE [LARGE SCALE GENOMIC DNA]</scope>
    <source>
        <strain>98HAH33</strain>
    </source>
</reference>
<name>GATA_STRS2</name>
<proteinExistence type="inferred from homology"/>